<feature type="transit peptide" description="Chloroplast" evidence="2">
    <location>
        <begin position="1"/>
        <end status="unknown"/>
    </location>
</feature>
<feature type="chain" id="PRO_0000011177" description="Glutamine synthetase, chloroplastic">
    <location>
        <begin status="unknown"/>
        <end position="432"/>
    </location>
</feature>
<feature type="domain" description="GS beta-grasp" evidence="3">
    <location>
        <begin position="79"/>
        <end position="159"/>
    </location>
</feature>
<feature type="domain" description="GS catalytic" evidence="4">
    <location>
        <begin position="166"/>
        <end position="432"/>
    </location>
</feature>
<evidence type="ECO:0000250" key="1"/>
<evidence type="ECO:0000255" key="2"/>
<evidence type="ECO:0000255" key="3">
    <source>
        <dbReference type="PROSITE-ProRule" id="PRU01330"/>
    </source>
</evidence>
<evidence type="ECO:0000255" key="4">
    <source>
        <dbReference type="PROSITE-ProRule" id="PRU01331"/>
    </source>
</evidence>
<evidence type="ECO:0000305" key="5"/>
<keyword id="KW-0067">ATP-binding</keyword>
<keyword id="KW-0150">Chloroplast</keyword>
<keyword id="KW-0436">Ligase</keyword>
<keyword id="KW-0547">Nucleotide-binding</keyword>
<keyword id="KW-0934">Plastid</keyword>
<keyword id="KW-0809">Transit peptide</keyword>
<proteinExistence type="evidence at transcript level"/>
<dbReference type="EC" id="6.3.1.2"/>
<dbReference type="EMBL" id="AF019561">
    <property type="protein sequence ID" value="AAB71693.1"/>
    <property type="molecule type" value="mRNA"/>
</dbReference>
<dbReference type="PIR" id="T14292">
    <property type="entry name" value="T14292"/>
</dbReference>
<dbReference type="SMR" id="O22506"/>
<dbReference type="GO" id="GO:0009507">
    <property type="term" value="C:chloroplast"/>
    <property type="evidence" value="ECO:0007669"/>
    <property type="project" value="UniProtKB-SubCell"/>
</dbReference>
<dbReference type="GO" id="GO:0005524">
    <property type="term" value="F:ATP binding"/>
    <property type="evidence" value="ECO:0007669"/>
    <property type="project" value="UniProtKB-KW"/>
</dbReference>
<dbReference type="GO" id="GO:0004356">
    <property type="term" value="F:glutamine synthetase activity"/>
    <property type="evidence" value="ECO:0007669"/>
    <property type="project" value="UniProtKB-EC"/>
</dbReference>
<dbReference type="GO" id="GO:0006542">
    <property type="term" value="P:glutamine biosynthetic process"/>
    <property type="evidence" value="ECO:0007669"/>
    <property type="project" value="InterPro"/>
</dbReference>
<dbReference type="FunFam" id="3.30.590.10:FF:000004">
    <property type="entry name" value="Glutamine synthetase"/>
    <property type="match status" value="1"/>
</dbReference>
<dbReference type="FunFam" id="3.10.20.70:FF:000003">
    <property type="entry name" value="Glutamine synthetase, chloroplastic"/>
    <property type="match status" value="1"/>
</dbReference>
<dbReference type="Gene3D" id="3.10.20.70">
    <property type="entry name" value="Glutamine synthetase, N-terminal domain"/>
    <property type="match status" value="1"/>
</dbReference>
<dbReference type="Gene3D" id="3.30.590.10">
    <property type="entry name" value="Glutamine synthetase/guanido kinase, catalytic domain"/>
    <property type="match status" value="1"/>
</dbReference>
<dbReference type="InterPro" id="IPR008147">
    <property type="entry name" value="Gln_synt_N"/>
</dbReference>
<dbReference type="InterPro" id="IPR036651">
    <property type="entry name" value="Gln_synt_N_sf"/>
</dbReference>
<dbReference type="InterPro" id="IPR014746">
    <property type="entry name" value="Gln_synth/guanido_kin_cat_dom"/>
</dbReference>
<dbReference type="InterPro" id="IPR008146">
    <property type="entry name" value="Gln_synth_cat_dom"/>
</dbReference>
<dbReference type="InterPro" id="IPR027303">
    <property type="entry name" value="Gln_synth_gly_rich_site"/>
</dbReference>
<dbReference type="InterPro" id="IPR027302">
    <property type="entry name" value="Gln_synth_N_conserv_site"/>
</dbReference>
<dbReference type="InterPro" id="IPR050292">
    <property type="entry name" value="Glutamine_Synthetase"/>
</dbReference>
<dbReference type="PANTHER" id="PTHR20852">
    <property type="entry name" value="GLUTAMINE SYNTHETASE"/>
    <property type="match status" value="1"/>
</dbReference>
<dbReference type="PANTHER" id="PTHR20852:SF118">
    <property type="entry name" value="GLUTAMINE SYNTHETASE, CHLOROPLASTIC_MITOCHONDRIAL"/>
    <property type="match status" value="1"/>
</dbReference>
<dbReference type="Pfam" id="PF00120">
    <property type="entry name" value="Gln-synt_C"/>
    <property type="match status" value="1"/>
</dbReference>
<dbReference type="Pfam" id="PF03951">
    <property type="entry name" value="Gln-synt_N"/>
    <property type="match status" value="1"/>
</dbReference>
<dbReference type="SMART" id="SM01230">
    <property type="entry name" value="Gln-synt_C"/>
    <property type="match status" value="1"/>
</dbReference>
<dbReference type="SUPFAM" id="SSF54368">
    <property type="entry name" value="Glutamine synthetase, N-terminal domain"/>
    <property type="match status" value="1"/>
</dbReference>
<dbReference type="SUPFAM" id="SSF55931">
    <property type="entry name" value="Glutamine synthetase/guanido kinase"/>
    <property type="match status" value="1"/>
</dbReference>
<dbReference type="PROSITE" id="PS00180">
    <property type="entry name" value="GLNA_1"/>
    <property type="match status" value="1"/>
</dbReference>
<dbReference type="PROSITE" id="PS00181">
    <property type="entry name" value="GLNA_ATP"/>
    <property type="match status" value="1"/>
</dbReference>
<dbReference type="PROSITE" id="PS51986">
    <property type="entry name" value="GS_BETA_GRASP"/>
    <property type="match status" value="1"/>
</dbReference>
<dbReference type="PROSITE" id="PS51987">
    <property type="entry name" value="GS_CATALYTIC"/>
    <property type="match status" value="1"/>
</dbReference>
<organism>
    <name type="scientific">Daucus carota</name>
    <name type="common">Wild carrot</name>
    <dbReference type="NCBI Taxonomy" id="4039"/>
    <lineage>
        <taxon>Eukaryota</taxon>
        <taxon>Viridiplantae</taxon>
        <taxon>Streptophyta</taxon>
        <taxon>Embryophyta</taxon>
        <taxon>Tracheophyta</taxon>
        <taxon>Spermatophyta</taxon>
        <taxon>Magnoliopsida</taxon>
        <taxon>eudicotyledons</taxon>
        <taxon>Gunneridae</taxon>
        <taxon>Pentapetalae</taxon>
        <taxon>asterids</taxon>
        <taxon>campanulids</taxon>
        <taxon>Apiales</taxon>
        <taxon>Apiaceae</taxon>
        <taxon>Apioideae</taxon>
        <taxon>Scandiceae</taxon>
        <taxon>Daucinae</taxon>
        <taxon>Daucus</taxon>
        <taxon>Daucus sect. Daucus</taxon>
    </lineage>
</organism>
<comment type="function">
    <text evidence="1">The light-modulated chloroplast enzyme, encoded by a nuclear gene and expressed primarily in leaves, is responsible for the reassimilation of the ammonia generated by photorespiration.</text>
</comment>
<comment type="catalytic activity">
    <reaction>
        <text>L-glutamate + NH4(+) + ATP = L-glutamine + ADP + phosphate + H(+)</text>
        <dbReference type="Rhea" id="RHEA:16169"/>
        <dbReference type="ChEBI" id="CHEBI:15378"/>
        <dbReference type="ChEBI" id="CHEBI:28938"/>
        <dbReference type="ChEBI" id="CHEBI:29985"/>
        <dbReference type="ChEBI" id="CHEBI:30616"/>
        <dbReference type="ChEBI" id="CHEBI:43474"/>
        <dbReference type="ChEBI" id="CHEBI:58359"/>
        <dbReference type="ChEBI" id="CHEBI:456216"/>
        <dbReference type="EC" id="6.3.1.2"/>
    </reaction>
</comment>
<comment type="subunit">
    <text evidence="1">Homooctamer.</text>
</comment>
<comment type="subcellular location">
    <subcellularLocation>
        <location evidence="1">Plastid</location>
        <location evidence="1">Chloroplast</location>
    </subcellularLocation>
</comment>
<comment type="similarity">
    <text evidence="5">Belongs to the glutamine synthetase family.</text>
</comment>
<sequence>MAQILAPSVQWQMRFTKNSTEVSSMTSKMWGSLFLKQNKKAPARSSTKYRALAVKSEDGTINRMEDLLNLDVTPYTDKIIAEYIWIGGTGIDVRSKSRTISKPVEHPSELPKWNYDGSSTGQAPGDDSEVILYPQAIFKDPFRGGNNILVICDTYTPQGEPIPTNKRHKAAQIFSDAKVLGEVPWFGIEQEYTLMQQDVNWPLGWNVGGYPGPQGPYYCAAGADKSFGRDISDAHYKACLYAGINISGTNGEVMPGQWEFQVGPSVGIEAGDHIWCARYLLERITEQAGVVLTLDPKPIDGDWNGAGCHTNYSTKSMREEGGFEVIKKAILNLSLRHKEHISAYGEGNERRLTGKHETASIDSFSWGVADRGCSIRVGRDTEKEGKGYLEDRRPASNMDPYVVTGLLAETTLLWEPTLEAEALAAQKLSLNV</sequence>
<protein>
    <recommendedName>
        <fullName>Glutamine synthetase, chloroplastic</fullName>
        <ecNumber>6.3.1.2</ecNumber>
    </recommendedName>
    <alternativeName>
        <fullName>GS2</fullName>
    </alternativeName>
    <alternativeName>
        <fullName>Glutamate--ammonia ligase</fullName>
    </alternativeName>
</protein>
<gene>
    <name type="primary">GLN2</name>
</gene>
<accession>O22506</accession>
<reference key="1">
    <citation type="submission" date="1997-08" db="EMBL/GenBank/DDBJ databases">
        <authorList>
            <person name="Higashi K."/>
            <person name="Kamada H."/>
        </authorList>
    </citation>
    <scope>NUCLEOTIDE SEQUENCE [MRNA]</scope>
    <source>
        <strain>cv. US-Harumakigosun</strain>
        <tissue>Leaf</tissue>
    </source>
</reference>
<name>GLNA2_DAUCA</name>